<dbReference type="EMBL" id="AF311784">
    <property type="protein sequence ID" value="AAK00895.1"/>
    <property type="molecule type" value="Genomic_DNA"/>
</dbReference>
<dbReference type="EMBL" id="CP000253">
    <property type="protein sequence ID" value="ABD30456.1"/>
    <property type="molecule type" value="Genomic_DNA"/>
</dbReference>
<dbReference type="RefSeq" id="WP_000356975.1">
    <property type="nucleotide sequence ID" value="NZ_LS483365.1"/>
</dbReference>
<dbReference type="RefSeq" id="YP_499888.1">
    <property type="nucleotide sequence ID" value="NC_007795.1"/>
</dbReference>
<dbReference type="SMR" id="Q7BHL7"/>
<dbReference type="STRING" id="93061.SAOUHSC_01361"/>
<dbReference type="PaxDb" id="1280-SAXN108_1378"/>
<dbReference type="GeneID" id="3920066"/>
<dbReference type="KEGG" id="sao:SAOUHSC_01361"/>
<dbReference type="PATRIC" id="fig|93061.5.peg.1245"/>
<dbReference type="eggNOG" id="COG1316">
    <property type="taxonomic scope" value="Bacteria"/>
</dbReference>
<dbReference type="HOGENOM" id="CLU_016455_1_0_9"/>
<dbReference type="OrthoDB" id="9782542at2"/>
<dbReference type="PRO" id="PR:Q7BHL7"/>
<dbReference type="Proteomes" id="UP000008816">
    <property type="component" value="Chromosome"/>
</dbReference>
<dbReference type="GO" id="GO:0005886">
    <property type="term" value="C:plasma membrane"/>
    <property type="evidence" value="ECO:0007669"/>
    <property type="project" value="UniProtKB-SubCell"/>
</dbReference>
<dbReference type="Gene3D" id="3.40.630.190">
    <property type="entry name" value="LCP protein"/>
    <property type="match status" value="1"/>
</dbReference>
<dbReference type="InterPro" id="IPR050922">
    <property type="entry name" value="LytR/CpsA/Psr_CW_biosynth"/>
</dbReference>
<dbReference type="InterPro" id="IPR004474">
    <property type="entry name" value="LytR_CpsA_psr"/>
</dbReference>
<dbReference type="NCBIfam" id="TIGR00350">
    <property type="entry name" value="lytR_cpsA_psr"/>
    <property type="match status" value="1"/>
</dbReference>
<dbReference type="PANTHER" id="PTHR33392">
    <property type="entry name" value="POLYISOPRENYL-TEICHOIC ACID--PEPTIDOGLYCAN TEICHOIC ACID TRANSFERASE TAGU"/>
    <property type="match status" value="1"/>
</dbReference>
<dbReference type="PANTHER" id="PTHR33392:SF8">
    <property type="entry name" value="REGULATORY PROTEIN MSRR"/>
    <property type="match status" value="1"/>
</dbReference>
<dbReference type="Pfam" id="PF03816">
    <property type="entry name" value="LytR_cpsA_psr"/>
    <property type="match status" value="1"/>
</dbReference>
<sequence>MDKETNDNEYRRQSEHRTSAPKRKKKKKIRKLPIILLIVVILLIALVVYIVHSYNSGVEYAKKHAKDVKVHQFNGPVKNDGKISILVLGADKAQGGQSRTDSIMVVQYDFINKKMKMMSVMRDIYADIPGYGKHKINSAYALGGPELLRKTLDKNLGINPEYYAVVDFTGFEKMIDELMPEGVPINVEKDMSKNIGVSLKKGNHRLNGKELLGYARFRHDPEGDFGRVRRQQQVMQTLKKEMVNFRTVVKLPKVAGILRGYVNTNIPDSGIFQTGLSFGIRGEKDVKSLTVPIKNSYEDVNTNTDGSALQINKNTNKQAIKDFLDED</sequence>
<accession>Q7BHL7</accession>
<accession>Q2G2L9</accession>
<proteinExistence type="evidence at transcript level"/>
<keyword id="KW-1003">Cell membrane</keyword>
<keyword id="KW-0472">Membrane</keyword>
<keyword id="KW-1185">Reference proteome</keyword>
<keyword id="KW-0735">Signal-anchor</keyword>
<keyword id="KW-0804">Transcription</keyword>
<keyword id="KW-0805">Transcription regulation</keyword>
<keyword id="KW-0812">Transmembrane</keyword>
<keyword id="KW-1133">Transmembrane helix</keyword>
<organism>
    <name type="scientific">Staphylococcus aureus (strain NCTC 8325 / PS 47)</name>
    <dbReference type="NCBI Taxonomy" id="93061"/>
    <lineage>
        <taxon>Bacteria</taxon>
        <taxon>Bacillati</taxon>
        <taxon>Bacillota</taxon>
        <taxon>Bacilli</taxon>
        <taxon>Bacillales</taxon>
        <taxon>Staphylococcaceae</taxon>
        <taxon>Staphylococcus</taxon>
    </lineage>
</organism>
<feature type="chain" id="PRO_0000218501" description="Regulatory protein MsrR">
    <location>
        <begin position="1"/>
        <end position="327"/>
    </location>
</feature>
<feature type="topological domain" description="Cytoplasmic" evidence="1">
    <location>
        <begin position="1"/>
        <end position="31"/>
    </location>
</feature>
<feature type="transmembrane region" description="Helical; Signal-anchor for type II membrane protein" evidence="1">
    <location>
        <begin position="32"/>
        <end position="52"/>
    </location>
</feature>
<feature type="topological domain" description="Extracellular" evidence="1">
    <location>
        <begin position="53"/>
        <end position="327"/>
    </location>
</feature>
<feature type="region of interest" description="Disordered" evidence="2">
    <location>
        <begin position="1"/>
        <end position="24"/>
    </location>
</feature>
<feature type="compositionally biased region" description="Basic and acidic residues" evidence="2">
    <location>
        <begin position="1"/>
        <end position="18"/>
    </location>
</feature>
<protein>
    <recommendedName>
        <fullName>Regulatory protein MsrR</fullName>
    </recommendedName>
</protein>
<reference key="1">
    <citation type="journal article" date="2003" name="Antimicrob. Agents Chemother.">
        <title>MsrR, a putative cell envelope-associated element involved in Staphylococcus aureus sarA attenuation.</title>
        <authorList>
            <person name="Rossi J."/>
            <person name="Bischoff M."/>
            <person name="Wada A."/>
            <person name="Berger-Baechi B."/>
        </authorList>
    </citation>
    <scope>NUCLEOTIDE SEQUENCE [GENOMIC DNA]</scope>
    <scope>FUNCTION</scope>
    <scope>INDUCTION</scope>
</reference>
<reference key="2">
    <citation type="book" date="2006" name="Gram positive pathogens, 2nd edition">
        <title>The Staphylococcus aureus NCTC 8325 genome.</title>
        <editorList>
            <person name="Fischetti V."/>
            <person name="Novick R."/>
            <person name="Ferretti J."/>
            <person name="Portnoy D."/>
            <person name="Rood J."/>
        </editorList>
        <authorList>
            <person name="Gillaspy A.F."/>
            <person name="Worrell V."/>
            <person name="Orvis J."/>
            <person name="Roe B.A."/>
            <person name="Dyer D.W."/>
            <person name="Iandolo J.J."/>
        </authorList>
    </citation>
    <scope>NUCLEOTIDE SEQUENCE [LARGE SCALE GENOMIC DNA]</scope>
    <source>
        <strain>NCTC 8325 / PS 47</strain>
    </source>
</reference>
<name>MSRR_STAA8</name>
<evidence type="ECO:0000255" key="1"/>
<evidence type="ECO:0000256" key="2">
    <source>
        <dbReference type="SAM" id="MobiDB-lite"/>
    </source>
</evidence>
<evidence type="ECO:0000269" key="3">
    <source>
    </source>
</evidence>
<evidence type="ECO:0000305" key="4"/>
<comment type="function">
    <text evidence="3">Involved in SarA attenuation. Affects resistance to oxacillin and teicoplanin, as well as the synthesis of virulence factors.</text>
</comment>
<comment type="subcellular location">
    <subcellularLocation>
        <location evidence="4">Cell membrane</location>
        <topology evidence="4">Single-pass type II membrane protein</topology>
    </subcellularLocation>
</comment>
<comment type="developmental stage">
    <text>Expression peaks in the early exponential growth phase and decreases towards the late exponential and stationary phases.</text>
</comment>
<comment type="induction">
    <text evidence="3">Induced by cell wall-active agents, such as beta-lactams, glycopeptides, bacitracin, fosfomycin and lysostaphin.</text>
</comment>
<comment type="similarity">
    <text evidence="4">Belongs to the LytR/CpsA/Psr (LCP) family.</text>
</comment>
<gene>
    <name type="primary">msrR</name>
    <name type="ordered locus">SAOUHSC_01361</name>
</gene>